<accession>B6J5Y2</accession>
<dbReference type="EC" id="2.1.1.222" evidence="1"/>
<dbReference type="EC" id="2.1.1.64" evidence="1"/>
<dbReference type="EMBL" id="CP001020">
    <property type="protein sequence ID" value="ACJ19824.1"/>
    <property type="molecule type" value="Genomic_DNA"/>
</dbReference>
<dbReference type="RefSeq" id="WP_005769166.1">
    <property type="nucleotide sequence ID" value="NC_011528.1"/>
</dbReference>
<dbReference type="SMR" id="B6J5Y2"/>
<dbReference type="KEGG" id="cbc:CbuK_0546"/>
<dbReference type="HOGENOM" id="CLU_042432_5_0_6"/>
<dbReference type="UniPathway" id="UPA00232"/>
<dbReference type="GO" id="GO:0102208">
    <property type="term" value="F:2-polyprenyl-6-hydroxyphenol methylase activity"/>
    <property type="evidence" value="ECO:0007669"/>
    <property type="project" value="UniProtKB-EC"/>
</dbReference>
<dbReference type="GO" id="GO:0061542">
    <property type="term" value="F:3-demethylubiquinol 3-O-methyltransferase activity"/>
    <property type="evidence" value="ECO:0007669"/>
    <property type="project" value="UniProtKB-UniRule"/>
</dbReference>
<dbReference type="GO" id="GO:0010420">
    <property type="term" value="F:polyprenyldihydroxybenzoate methyltransferase activity"/>
    <property type="evidence" value="ECO:0007669"/>
    <property type="project" value="InterPro"/>
</dbReference>
<dbReference type="GO" id="GO:0032259">
    <property type="term" value="P:methylation"/>
    <property type="evidence" value="ECO:0007669"/>
    <property type="project" value="UniProtKB-KW"/>
</dbReference>
<dbReference type="CDD" id="cd02440">
    <property type="entry name" value="AdoMet_MTases"/>
    <property type="match status" value="1"/>
</dbReference>
<dbReference type="FunFam" id="3.40.50.150:FF:000028">
    <property type="entry name" value="Ubiquinone biosynthesis O-methyltransferase"/>
    <property type="match status" value="1"/>
</dbReference>
<dbReference type="Gene3D" id="3.40.50.150">
    <property type="entry name" value="Vaccinia Virus protein VP39"/>
    <property type="match status" value="1"/>
</dbReference>
<dbReference type="HAMAP" id="MF_00472">
    <property type="entry name" value="UbiG"/>
    <property type="match status" value="1"/>
</dbReference>
<dbReference type="InterPro" id="IPR029063">
    <property type="entry name" value="SAM-dependent_MTases_sf"/>
</dbReference>
<dbReference type="InterPro" id="IPR010233">
    <property type="entry name" value="UbiG_MeTrfase"/>
</dbReference>
<dbReference type="NCBIfam" id="TIGR01983">
    <property type="entry name" value="UbiG"/>
    <property type="match status" value="1"/>
</dbReference>
<dbReference type="PANTHER" id="PTHR43464">
    <property type="entry name" value="METHYLTRANSFERASE"/>
    <property type="match status" value="1"/>
</dbReference>
<dbReference type="PANTHER" id="PTHR43464:SF19">
    <property type="entry name" value="UBIQUINONE BIOSYNTHESIS O-METHYLTRANSFERASE, MITOCHONDRIAL"/>
    <property type="match status" value="1"/>
</dbReference>
<dbReference type="Pfam" id="PF13489">
    <property type="entry name" value="Methyltransf_23"/>
    <property type="match status" value="1"/>
</dbReference>
<dbReference type="SUPFAM" id="SSF53335">
    <property type="entry name" value="S-adenosyl-L-methionine-dependent methyltransferases"/>
    <property type="match status" value="1"/>
</dbReference>
<feature type="chain" id="PRO_1000199676" description="Ubiquinone biosynthesis O-methyltransferase">
    <location>
        <begin position="1"/>
        <end position="234"/>
    </location>
</feature>
<feature type="binding site" evidence="1">
    <location>
        <position position="40"/>
    </location>
    <ligand>
        <name>S-adenosyl-L-methionine</name>
        <dbReference type="ChEBI" id="CHEBI:59789"/>
    </ligand>
</feature>
<feature type="binding site" evidence="1">
    <location>
        <position position="59"/>
    </location>
    <ligand>
        <name>S-adenosyl-L-methionine</name>
        <dbReference type="ChEBI" id="CHEBI:59789"/>
    </ligand>
</feature>
<feature type="binding site" evidence="1">
    <location>
        <position position="80"/>
    </location>
    <ligand>
        <name>S-adenosyl-L-methionine</name>
        <dbReference type="ChEBI" id="CHEBI:59789"/>
    </ligand>
</feature>
<feature type="binding site" evidence="1">
    <location>
        <position position="123"/>
    </location>
    <ligand>
        <name>S-adenosyl-L-methionine</name>
        <dbReference type="ChEBI" id="CHEBI:59789"/>
    </ligand>
</feature>
<organism>
    <name type="scientific">Coxiella burnetii (strain CbuK_Q154)</name>
    <name type="common">Coxiella burnetii (strain Q154)</name>
    <dbReference type="NCBI Taxonomy" id="434924"/>
    <lineage>
        <taxon>Bacteria</taxon>
        <taxon>Pseudomonadati</taxon>
        <taxon>Pseudomonadota</taxon>
        <taxon>Gammaproteobacteria</taxon>
        <taxon>Legionellales</taxon>
        <taxon>Coxiellaceae</taxon>
        <taxon>Coxiella</taxon>
    </lineage>
</organism>
<gene>
    <name evidence="1" type="primary">ubiG</name>
    <name type="ordered locus">CbuK_0546</name>
</gene>
<sequence length="234" mass="26469">MTPSEQNIDKEELAKFSDLAQDWWNPAGKMKPLHLINPVRLKYIEQQITLKGKHVLDVGCGGGLLSEALAKHGAIVTGVDMSESLIDVAKNHAEQQQLNINYQCQDIEILTKDAQRFDIITCMELLEHVPDPQRMIKNCAALIKPGGKLFFSTINRNFKAYLYTIVGAEYVFNLLPKGTHDYAQFIRPSELTQWAESGGLRLLDITGIHYHPLKNEFDLSRDVSVNYLACFTHE</sequence>
<protein>
    <recommendedName>
        <fullName evidence="1">Ubiquinone biosynthesis O-methyltransferase</fullName>
    </recommendedName>
    <alternativeName>
        <fullName evidence="1">2-polyprenyl-6-hydroxyphenol methylase</fullName>
        <ecNumber evidence="1">2.1.1.222</ecNumber>
    </alternativeName>
    <alternativeName>
        <fullName evidence="1">3-demethylubiquinone 3-O-methyltransferase</fullName>
        <ecNumber evidence="1">2.1.1.64</ecNumber>
    </alternativeName>
</protein>
<reference key="1">
    <citation type="journal article" date="2009" name="Infect. Immun.">
        <title>Comparative genomics reveal extensive transposon-mediated genomic plasticity and diversity among potential effector proteins within the genus Coxiella.</title>
        <authorList>
            <person name="Beare P.A."/>
            <person name="Unsworth N."/>
            <person name="Andoh M."/>
            <person name="Voth D.E."/>
            <person name="Omsland A."/>
            <person name="Gilk S.D."/>
            <person name="Williams K.P."/>
            <person name="Sobral B.W."/>
            <person name="Kupko J.J. III"/>
            <person name="Porcella S.F."/>
            <person name="Samuel J.E."/>
            <person name="Heinzen R.A."/>
        </authorList>
    </citation>
    <scope>NUCLEOTIDE SEQUENCE [LARGE SCALE GENOMIC DNA]</scope>
    <source>
        <strain>CbuK_Q154</strain>
    </source>
</reference>
<name>UBIG_COXB1</name>
<comment type="function">
    <text evidence="1">O-methyltransferase that catalyzes the 2 O-methylation steps in the ubiquinone biosynthetic pathway.</text>
</comment>
<comment type="catalytic activity">
    <reaction evidence="1">
        <text>a 3-demethylubiquinol + S-adenosyl-L-methionine = a ubiquinol + S-adenosyl-L-homocysteine + H(+)</text>
        <dbReference type="Rhea" id="RHEA:44380"/>
        <dbReference type="Rhea" id="RHEA-COMP:9566"/>
        <dbReference type="Rhea" id="RHEA-COMP:10914"/>
        <dbReference type="ChEBI" id="CHEBI:15378"/>
        <dbReference type="ChEBI" id="CHEBI:17976"/>
        <dbReference type="ChEBI" id="CHEBI:57856"/>
        <dbReference type="ChEBI" id="CHEBI:59789"/>
        <dbReference type="ChEBI" id="CHEBI:84422"/>
        <dbReference type="EC" id="2.1.1.64"/>
    </reaction>
</comment>
<comment type="catalytic activity">
    <reaction evidence="1">
        <text>a 3-(all-trans-polyprenyl)benzene-1,2-diol + S-adenosyl-L-methionine = a 2-methoxy-6-(all-trans-polyprenyl)phenol + S-adenosyl-L-homocysteine + H(+)</text>
        <dbReference type="Rhea" id="RHEA:31411"/>
        <dbReference type="Rhea" id="RHEA-COMP:9550"/>
        <dbReference type="Rhea" id="RHEA-COMP:9551"/>
        <dbReference type="ChEBI" id="CHEBI:15378"/>
        <dbReference type="ChEBI" id="CHEBI:57856"/>
        <dbReference type="ChEBI" id="CHEBI:59789"/>
        <dbReference type="ChEBI" id="CHEBI:62729"/>
        <dbReference type="ChEBI" id="CHEBI:62731"/>
        <dbReference type="EC" id="2.1.1.222"/>
    </reaction>
</comment>
<comment type="pathway">
    <text evidence="1">Cofactor biosynthesis; ubiquinone biosynthesis.</text>
</comment>
<comment type="similarity">
    <text evidence="1">Belongs to the methyltransferase superfamily. UbiG/COQ3 family.</text>
</comment>
<evidence type="ECO:0000255" key="1">
    <source>
        <dbReference type="HAMAP-Rule" id="MF_00472"/>
    </source>
</evidence>
<proteinExistence type="inferred from homology"/>
<keyword id="KW-0489">Methyltransferase</keyword>
<keyword id="KW-0949">S-adenosyl-L-methionine</keyword>
<keyword id="KW-0808">Transferase</keyword>
<keyword id="KW-0831">Ubiquinone biosynthesis</keyword>